<dbReference type="EMBL" id="DQ976877">
    <property type="protein sequence ID" value="ABM55164.1"/>
    <property type="molecule type" value="Genomic_DNA"/>
</dbReference>
<dbReference type="RefSeq" id="NP_001074231.1">
    <property type="nucleotide sequence ID" value="NM_001080762.1"/>
</dbReference>
<dbReference type="RefSeq" id="XP_014983356.1">
    <property type="nucleotide sequence ID" value="XM_015127870.2"/>
</dbReference>
<dbReference type="RefSeq" id="XP_014983357.1">
    <property type="nucleotide sequence ID" value="XM_015127871.2"/>
</dbReference>
<dbReference type="RefSeq" id="XP_014983359.1">
    <property type="nucleotide sequence ID" value="XM_015127873.2"/>
</dbReference>
<dbReference type="RefSeq" id="XP_014983360.1">
    <property type="nucleotide sequence ID" value="XM_015127874.2"/>
</dbReference>
<dbReference type="RefSeq" id="XP_014983361.1">
    <property type="nucleotide sequence ID" value="XM_015127875.2"/>
</dbReference>
<dbReference type="RefSeq" id="XP_028697507.1">
    <property type="nucleotide sequence ID" value="XM_028841674.1"/>
</dbReference>
<dbReference type="RefSeq" id="XP_028697509.1">
    <property type="nucleotide sequence ID" value="XM_028841676.1"/>
</dbReference>
<dbReference type="RefSeq" id="XP_028697510.1">
    <property type="nucleotide sequence ID" value="XM_028841677.1"/>
</dbReference>
<dbReference type="FunCoup" id="A2D671">
    <property type="interactions" value="859"/>
</dbReference>
<dbReference type="STRING" id="9544.ENSMMUP00000040898"/>
<dbReference type="PaxDb" id="9544-ENSMMUP00000040898"/>
<dbReference type="Ensembl" id="ENSMMUT00000004951.4">
    <property type="protein sequence ID" value="ENSMMUP00000040898.1"/>
    <property type="gene ID" value="ENSMMUG00000003500.4"/>
</dbReference>
<dbReference type="Ensembl" id="ENSMMUT00000100325.1">
    <property type="protein sequence ID" value="ENSMMUP00000074088.1"/>
    <property type="gene ID" value="ENSMMUG00000003500.4"/>
</dbReference>
<dbReference type="GeneID" id="696826"/>
<dbReference type="KEGG" id="mcc:696826"/>
<dbReference type="CTD" id="9338"/>
<dbReference type="VEuPathDB" id="HostDB:ENSMMUG00000003500"/>
<dbReference type="VGNC" id="VGNC:78282">
    <property type="gene designation" value="TCEAL1"/>
</dbReference>
<dbReference type="eggNOG" id="ENOG502TCYF">
    <property type="taxonomic scope" value="Eukaryota"/>
</dbReference>
<dbReference type="GeneTree" id="ENSGT00950000183164"/>
<dbReference type="HOGENOM" id="CLU_140430_0_0_1"/>
<dbReference type="InParanoid" id="A2D671"/>
<dbReference type="OMA" id="HWKAKRN"/>
<dbReference type="OrthoDB" id="9537246at2759"/>
<dbReference type="TreeFam" id="TF336871"/>
<dbReference type="Proteomes" id="UP000006718">
    <property type="component" value="Chromosome X"/>
</dbReference>
<dbReference type="Bgee" id="ENSMMUG00000003500">
    <property type="expression patterns" value="Expressed in Ammon's horn and 22 other cell types or tissues"/>
</dbReference>
<dbReference type="ExpressionAtlas" id="A2D671">
    <property type="expression patterns" value="baseline"/>
</dbReference>
<dbReference type="GO" id="GO:0005654">
    <property type="term" value="C:nucleoplasm"/>
    <property type="evidence" value="ECO:0007669"/>
    <property type="project" value="Ensembl"/>
</dbReference>
<dbReference type="InterPro" id="IPR021156">
    <property type="entry name" value="TF_A-like/BEX"/>
</dbReference>
<dbReference type="Pfam" id="PF04538">
    <property type="entry name" value="BEX"/>
    <property type="match status" value="1"/>
</dbReference>
<organism>
    <name type="scientific">Macaca mulatta</name>
    <name type="common">Rhesus macaque</name>
    <dbReference type="NCBI Taxonomy" id="9544"/>
    <lineage>
        <taxon>Eukaryota</taxon>
        <taxon>Metazoa</taxon>
        <taxon>Chordata</taxon>
        <taxon>Craniata</taxon>
        <taxon>Vertebrata</taxon>
        <taxon>Euteleostomi</taxon>
        <taxon>Mammalia</taxon>
        <taxon>Eutheria</taxon>
        <taxon>Euarchontoglires</taxon>
        <taxon>Primates</taxon>
        <taxon>Haplorrhini</taxon>
        <taxon>Catarrhini</taxon>
        <taxon>Cercopithecidae</taxon>
        <taxon>Cercopithecinae</taxon>
        <taxon>Macaca</taxon>
    </lineage>
</organism>
<sequence length="159" mass="18657">MDKPRKENEEEPQSAPKTDEERPPVEHSPEKQSLEEQSSEEQSSEEEFFPEELLPELLPEMLLSEERPPQEGLSRKDLFEGRPPMEQPPCGVGKHKLEEGSFKERLARSRPQFRGDIHGRNLSNEEMIQAADELEEMKRVRNKLMIMHWKAKRSRPYPI</sequence>
<name>TCAL1_MACMU</name>
<gene>
    <name evidence="2" type="primary">TCEAL1</name>
</gene>
<protein>
    <recommendedName>
        <fullName evidence="2">Transcription elongation factor A protein-like 1</fullName>
        <shortName>TCEA-like protein 1</shortName>
    </recommendedName>
    <alternativeName>
        <fullName>Transcription elongation factor S-II protein-like 1</fullName>
    </alternativeName>
</protein>
<comment type="function">
    <text evidence="1">May be involved in transcriptional regulation. Modulates various viral and cellular promoters in a promoter context-dependent manner. Does not bind DNA directly (By similarity).</text>
</comment>
<comment type="subcellular location">
    <subcellularLocation>
        <location evidence="1">Nucleus</location>
    </subcellularLocation>
</comment>
<comment type="similarity">
    <text evidence="4">Belongs to the TFS-II family. TFA subfamily.</text>
</comment>
<proteinExistence type="inferred from homology"/>
<reference key="1">
    <citation type="submission" date="2006-08" db="EMBL/GenBank/DDBJ databases">
        <title>Positive selection in transcription factor genes on the human lineage.</title>
        <authorList>
            <person name="Nickel G.C."/>
            <person name="Tefft D.L."/>
            <person name="Trevarthen K."/>
            <person name="Funt J."/>
            <person name="Adams M.D."/>
        </authorList>
    </citation>
    <scope>NUCLEOTIDE SEQUENCE [GENOMIC DNA]</scope>
</reference>
<accession>A2D671</accession>
<feature type="chain" id="PRO_0000285500" description="Transcription elongation factor A protein-like 1">
    <location>
        <begin position="1"/>
        <end position="159"/>
    </location>
</feature>
<feature type="region of interest" description="Disordered" evidence="3">
    <location>
        <begin position="1"/>
        <end position="99"/>
    </location>
</feature>
<feature type="compositionally biased region" description="Basic and acidic residues" evidence="3">
    <location>
        <begin position="17"/>
        <end position="34"/>
    </location>
</feature>
<feature type="compositionally biased region" description="Acidic residues" evidence="3">
    <location>
        <begin position="37"/>
        <end position="54"/>
    </location>
</feature>
<feature type="compositionally biased region" description="Basic and acidic residues" evidence="3">
    <location>
        <begin position="64"/>
        <end position="80"/>
    </location>
</feature>
<keyword id="KW-0539">Nucleus</keyword>
<keyword id="KW-1185">Reference proteome</keyword>
<keyword id="KW-0804">Transcription</keyword>
<keyword id="KW-0805">Transcription regulation</keyword>
<evidence type="ECO:0000250" key="1"/>
<evidence type="ECO:0000250" key="2">
    <source>
        <dbReference type="UniProtKB" id="Q15170"/>
    </source>
</evidence>
<evidence type="ECO:0000256" key="3">
    <source>
        <dbReference type="SAM" id="MobiDB-lite"/>
    </source>
</evidence>
<evidence type="ECO:0000305" key="4"/>